<sequence length="351" mass="37239">MKAAIALSLLGCVFGFSGKAFAGDAWGPCTPADGTTYHYNVDVDVGIPDAAKNVAGTVLPDVLNWSNGQNVSLICECPDSYKNEKDTLVQGVSMLPPSGRTVDSMKYYTLTEELEVATNIRISTSVYGFVPFKNQQALQTTGCNKVITTPYMGGAGLLSFAITKPFIGDSVIPLTLIAELYASKTNKDYGTIPISSVSIQGRVTVTQDCEIKPGTVLDVPFGEFPSSAFKNRQGQMPEGATEQEINLSFDCNNISDGIKVALRLEGATNADDPRAVDMGNPDIGVLVKDSSGKILVPNDSSSTTLLNLSSLDSKTHRNAAIRLLALPISTTGKAPKGGTFEGVTTIYLEME</sequence>
<organism>
    <name type="scientific">Escherichia coli O157:H7</name>
    <dbReference type="NCBI Taxonomy" id="83334"/>
    <lineage>
        <taxon>Bacteria</taxon>
        <taxon>Pseudomonadati</taxon>
        <taxon>Pseudomonadota</taxon>
        <taxon>Gammaproteobacteria</taxon>
        <taxon>Enterobacterales</taxon>
        <taxon>Enterobacteriaceae</taxon>
        <taxon>Escherichia</taxon>
    </lineage>
</organism>
<keyword id="KW-0281">Fimbrium</keyword>
<keyword id="KW-1185">Reference proteome</keyword>
<keyword id="KW-0732">Signal</keyword>
<comment type="function">
    <text evidence="3">Part of the lpfABCC'DE fimbrial operon. LP fimbriae may participate in the interaction with eukaryotic cells by assisting in microcolony formation.</text>
</comment>
<comment type="subcellular location">
    <subcellularLocation>
        <location evidence="1">Fimbrium</location>
    </subcellularLocation>
</comment>
<comment type="induction">
    <text evidence="3">Induced during the exponential growth phase.</text>
</comment>
<comment type="similarity">
    <text evidence="4">Belongs to the fimbrial protein family.</text>
</comment>
<evidence type="ECO:0000250" key="1"/>
<evidence type="ECO:0000255" key="2"/>
<evidence type="ECO:0000269" key="3">
    <source>
    </source>
</evidence>
<evidence type="ECO:0000305" key="4"/>
<gene>
    <name type="primary">lpfD</name>
    <name type="ordered locus">Z4966</name>
    <name type="ordered locus">ECs4427</name>
</gene>
<name>LPFD_ECO57</name>
<feature type="signal peptide" evidence="2">
    <location>
        <begin position="1"/>
        <end position="22"/>
    </location>
</feature>
<feature type="chain" id="PRO_0000429481" description="Probable minor fimbrial subunit LpfD">
    <location>
        <begin position="23"/>
        <end position="351"/>
    </location>
</feature>
<accession>Q8X5K9</accession>
<accession>Q7A9Y9</accession>
<proteinExistence type="evidence at transcript level"/>
<protein>
    <recommendedName>
        <fullName>Probable minor fimbrial subunit LpfD</fullName>
    </recommendedName>
</protein>
<reference key="1">
    <citation type="journal article" date="2001" name="DNA Res.">
        <title>Complete genome sequence of enterohemorrhagic Escherichia coli O157:H7 and genomic comparison with a laboratory strain K-12.</title>
        <authorList>
            <person name="Hayashi T."/>
            <person name="Makino K."/>
            <person name="Ohnishi M."/>
            <person name="Kurokawa K."/>
            <person name="Ishii K."/>
            <person name="Yokoyama K."/>
            <person name="Han C.-G."/>
            <person name="Ohtsubo E."/>
            <person name="Nakayama K."/>
            <person name="Murata T."/>
            <person name="Tanaka M."/>
            <person name="Tobe T."/>
            <person name="Iida T."/>
            <person name="Takami H."/>
            <person name="Honda T."/>
            <person name="Sasakawa C."/>
            <person name="Ogasawara N."/>
            <person name="Yasunaga T."/>
            <person name="Kuhara S."/>
            <person name="Shiba T."/>
            <person name="Hattori M."/>
            <person name="Shinagawa H."/>
        </authorList>
    </citation>
    <scope>NUCLEOTIDE SEQUENCE [LARGE SCALE GENOMIC DNA]</scope>
    <source>
        <strain>O157:H7 / Sakai / RIMD 0509952 / EHEC</strain>
    </source>
</reference>
<reference key="2">
    <citation type="journal article" date="2001" name="Nature">
        <title>Genome sequence of enterohaemorrhagic Escherichia coli O157:H7.</title>
        <authorList>
            <person name="Perna N.T."/>
            <person name="Plunkett G. III"/>
            <person name="Burland V."/>
            <person name="Mau B."/>
            <person name="Glasner J.D."/>
            <person name="Rose D.J."/>
            <person name="Mayhew G.F."/>
            <person name="Evans P.S."/>
            <person name="Gregor J."/>
            <person name="Kirkpatrick H.A."/>
            <person name="Posfai G."/>
            <person name="Hackett J."/>
            <person name="Klink S."/>
            <person name="Boutin A."/>
            <person name="Shao Y."/>
            <person name="Miller L."/>
            <person name="Grotbeck E.J."/>
            <person name="Davis N.W."/>
            <person name="Lim A."/>
            <person name="Dimalanta E.T."/>
            <person name="Potamousis K."/>
            <person name="Apodaca J."/>
            <person name="Anantharaman T.S."/>
            <person name="Lin J."/>
            <person name="Yen G."/>
            <person name="Schwartz D.C."/>
            <person name="Welch R.A."/>
            <person name="Blattner F.R."/>
        </authorList>
    </citation>
    <scope>NUCLEOTIDE SEQUENCE [LARGE SCALE GENOMIC DNA]</scope>
    <source>
        <strain>O157:H7 / EDL933 / ATCC 700927 / EHEC</strain>
    </source>
</reference>
<reference key="3">
    <citation type="journal article" date="2002" name="Infect. Immun.">
        <title>Identification and characterization of lpfABCC'DE, a fimbrial operon of enterohemorrhagic Escherichia coli O157:H7.</title>
        <authorList>
            <person name="Torres A.G."/>
            <person name="Giron J.A."/>
            <person name="Perna N.T."/>
            <person name="Burland V."/>
            <person name="Blattner F.R."/>
            <person name="Avelino-Flores F."/>
            <person name="Kaper J.B."/>
        </authorList>
    </citation>
    <scope>FUNCTION</scope>
    <scope>INDUCTION</scope>
    <scope>GENE NAME</scope>
    <source>
        <strain>O157:H7 / EDL933 / ATCC 700927 / EHEC</strain>
    </source>
</reference>
<dbReference type="EMBL" id="AE005174">
    <property type="protein sequence ID" value="AAG58691.1"/>
    <property type="molecule type" value="Genomic_DNA"/>
</dbReference>
<dbReference type="EMBL" id="BA000007">
    <property type="protein sequence ID" value="BAB37850.1"/>
    <property type="molecule type" value="Genomic_DNA"/>
</dbReference>
<dbReference type="PIR" id="C91182">
    <property type="entry name" value="C91182"/>
</dbReference>
<dbReference type="PIR" id="G86028">
    <property type="entry name" value="G86028"/>
</dbReference>
<dbReference type="RefSeq" id="WP_000642260.1">
    <property type="nucleotide sequence ID" value="NZ_VOAI01000004.1"/>
</dbReference>
<dbReference type="SMR" id="Q8X5K9"/>
<dbReference type="STRING" id="155864.Z4966"/>
<dbReference type="KEGG" id="ece:Z4966"/>
<dbReference type="KEGG" id="ecs:ECs_4427"/>
<dbReference type="PATRIC" id="fig|386585.9.peg.4633"/>
<dbReference type="eggNOG" id="COG3539">
    <property type="taxonomic scope" value="Bacteria"/>
</dbReference>
<dbReference type="HOGENOM" id="CLU_066608_0_0_6"/>
<dbReference type="OMA" id="ATMHVEL"/>
<dbReference type="Proteomes" id="UP000000558">
    <property type="component" value="Chromosome"/>
</dbReference>
<dbReference type="Proteomes" id="UP000002519">
    <property type="component" value="Chromosome"/>
</dbReference>
<dbReference type="GO" id="GO:0009289">
    <property type="term" value="C:pilus"/>
    <property type="evidence" value="ECO:0007669"/>
    <property type="project" value="UniProtKB-SubCell"/>
</dbReference>
<dbReference type="GO" id="GO:0043709">
    <property type="term" value="P:cell adhesion involved in single-species biofilm formation"/>
    <property type="evidence" value="ECO:0007669"/>
    <property type="project" value="TreeGrafter"/>
</dbReference>
<dbReference type="Gene3D" id="2.60.40.1090">
    <property type="entry name" value="Fimbrial-type adhesion domain"/>
    <property type="match status" value="1"/>
</dbReference>
<dbReference type="InterPro" id="IPR000259">
    <property type="entry name" value="Adhesion_dom_fimbrial"/>
</dbReference>
<dbReference type="InterPro" id="IPR036937">
    <property type="entry name" value="Adhesion_dom_fimbrial_sf"/>
</dbReference>
<dbReference type="InterPro" id="IPR008966">
    <property type="entry name" value="Adhesion_dom_sf"/>
</dbReference>
<dbReference type="InterPro" id="IPR050263">
    <property type="entry name" value="Bact_Fimbrial_Adh_Pro"/>
</dbReference>
<dbReference type="PANTHER" id="PTHR33420">
    <property type="entry name" value="FIMBRIAL SUBUNIT ELFA-RELATED"/>
    <property type="match status" value="1"/>
</dbReference>
<dbReference type="PANTHER" id="PTHR33420:SF31">
    <property type="entry name" value="TYPE 1 FIMBRIN D-MANNOSE SPECIFIC ADHESIN"/>
    <property type="match status" value="1"/>
</dbReference>
<dbReference type="Pfam" id="PF00419">
    <property type="entry name" value="Fimbrial"/>
    <property type="match status" value="1"/>
</dbReference>
<dbReference type="SUPFAM" id="SSF49401">
    <property type="entry name" value="Bacterial adhesins"/>
    <property type="match status" value="1"/>
</dbReference>